<sequence>MWKRSFHSQGGPLRARTKFTKPKPKQPVLPKDKIRPPTQLTHHSNNLRITEPIPPTTSNLRCPDDHPLWQFFSNKKFIRSADDLPPSSHIRPWSIPELRHKSFNDLHSLWYNCLREQNVLARENHLLKNIVGSTHDEFSELSNSIRTTMWQIRHVLNERELAYSASREFLQDESERKKFLDTLANDYFLNKDIPDDEVASMLTRFQLAIFGISETIQDNTVDINFIDGIKFLANLKLQRFKDSNDLISEISQEPITDVGESFILFTSDFEPHAVQEACVAIKDLRKSPDNKVPKLDELPTVRKYLKQLIHASSVEQATA</sequence>
<organism>
    <name type="scientific">Saccharomyces cerevisiae (strain YJM789)</name>
    <name type="common">Baker's yeast</name>
    <dbReference type="NCBI Taxonomy" id="307796"/>
    <lineage>
        <taxon>Eukaryota</taxon>
        <taxon>Fungi</taxon>
        <taxon>Dikarya</taxon>
        <taxon>Ascomycota</taxon>
        <taxon>Saccharomycotina</taxon>
        <taxon>Saccharomycetes</taxon>
        <taxon>Saccharomycetales</taxon>
        <taxon>Saccharomycetaceae</taxon>
        <taxon>Saccharomyces</taxon>
    </lineage>
</organism>
<name>RM04_YEAS7</name>
<comment type="subunit">
    <text evidence="1">Component of the mitochondrial large ribosomal subunit. Mature mitochondrial ribosomes consist of a small (37S) and a large (54S) subunit. The 37S subunit contains at least 33 different proteins and 1 molecule of RNA (15S). The 54S subunit contains at least 45 different proteins and 1 molecule of RNA (21S) (By similarity).</text>
</comment>
<comment type="subcellular location">
    <subcellularLocation>
        <location evidence="1">Mitochondrion</location>
    </subcellularLocation>
</comment>
<comment type="similarity">
    <text evidence="4">Belongs to the universal ribosomal protein uL29 family.</text>
</comment>
<feature type="transit peptide" description="Mitochondrion" evidence="2">
    <location>
        <begin position="1"/>
        <end status="unknown"/>
    </location>
</feature>
<feature type="chain" id="PRO_0000372415" description="Large ribosomal subunit protein uL29m">
    <location>
        <begin status="unknown"/>
        <end position="319"/>
    </location>
</feature>
<feature type="region of interest" description="Disordered" evidence="3">
    <location>
        <begin position="1"/>
        <end position="55"/>
    </location>
</feature>
<feature type="compositionally biased region" description="Basic residues" evidence="3">
    <location>
        <begin position="15"/>
        <end position="24"/>
    </location>
</feature>
<feature type="compositionally biased region" description="Polar residues" evidence="3">
    <location>
        <begin position="38"/>
        <end position="48"/>
    </location>
</feature>
<keyword id="KW-0496">Mitochondrion</keyword>
<keyword id="KW-0687">Ribonucleoprotein</keyword>
<keyword id="KW-0689">Ribosomal protein</keyword>
<keyword id="KW-0809">Transit peptide</keyword>
<accession>A7A1V9</accession>
<protein>
    <recommendedName>
        <fullName evidence="4">Large ribosomal subunit protein uL29m</fullName>
    </recommendedName>
    <alternativeName>
        <fullName>54S ribosomal protein L4, mitochondrial</fullName>
    </alternativeName>
    <alternativeName>
        <fullName>YmL4</fullName>
    </alternativeName>
</protein>
<reference key="1">
    <citation type="journal article" date="2007" name="Proc. Natl. Acad. Sci. U.S.A.">
        <title>Genome sequencing and comparative analysis of Saccharomyces cerevisiae strain YJM789.</title>
        <authorList>
            <person name="Wei W."/>
            <person name="McCusker J.H."/>
            <person name="Hyman R.W."/>
            <person name="Jones T."/>
            <person name="Ning Y."/>
            <person name="Cao Z."/>
            <person name="Gu Z."/>
            <person name="Bruno D."/>
            <person name="Miranda M."/>
            <person name="Nguyen M."/>
            <person name="Wilhelmy J."/>
            <person name="Komp C."/>
            <person name="Tamse R."/>
            <person name="Wang X."/>
            <person name="Jia P."/>
            <person name="Luedi P."/>
            <person name="Oefner P.J."/>
            <person name="David L."/>
            <person name="Dietrich F.S."/>
            <person name="Li Y."/>
            <person name="Davis R.W."/>
            <person name="Steinmetz L.M."/>
        </authorList>
    </citation>
    <scope>NUCLEOTIDE SEQUENCE [LARGE SCALE GENOMIC DNA]</scope>
    <source>
        <strain>YJM789</strain>
    </source>
</reference>
<gene>
    <name type="primary">MRPL4</name>
    <name type="ORF">SCY_3987</name>
</gene>
<dbReference type="EMBL" id="AAFW02000171">
    <property type="protein sequence ID" value="EDN59337.1"/>
    <property type="molecule type" value="Genomic_DNA"/>
</dbReference>
<dbReference type="SMR" id="A7A1V9"/>
<dbReference type="HOGENOM" id="CLU_872105_0_0_1"/>
<dbReference type="Proteomes" id="UP000007060">
    <property type="component" value="Unassembled WGS sequence"/>
</dbReference>
<dbReference type="GO" id="GO:0005762">
    <property type="term" value="C:mitochondrial large ribosomal subunit"/>
    <property type="evidence" value="ECO:0007669"/>
    <property type="project" value="TreeGrafter"/>
</dbReference>
<dbReference type="GO" id="GO:0003735">
    <property type="term" value="F:structural constituent of ribosome"/>
    <property type="evidence" value="ECO:0007669"/>
    <property type="project" value="InterPro"/>
</dbReference>
<dbReference type="GO" id="GO:0032543">
    <property type="term" value="P:mitochondrial translation"/>
    <property type="evidence" value="ECO:0007669"/>
    <property type="project" value="TreeGrafter"/>
</dbReference>
<dbReference type="Gene3D" id="6.10.140.1190">
    <property type="match status" value="1"/>
</dbReference>
<dbReference type="Gene3D" id="6.10.330.20">
    <property type="match status" value="1"/>
</dbReference>
<dbReference type="InterPro" id="IPR038340">
    <property type="entry name" value="MRP-L47_sf"/>
</dbReference>
<dbReference type="InterPro" id="IPR010729">
    <property type="entry name" value="Ribosomal_uL29_mit"/>
</dbReference>
<dbReference type="PANTHER" id="PTHR21183:SF18">
    <property type="entry name" value="LARGE RIBOSOMAL SUBUNIT PROTEIN UL29M"/>
    <property type="match status" value="1"/>
</dbReference>
<dbReference type="PANTHER" id="PTHR21183">
    <property type="entry name" value="RIBOSOMAL PROTEIN L47, MITOCHONDRIAL-RELATED"/>
    <property type="match status" value="1"/>
</dbReference>
<dbReference type="Pfam" id="PF06984">
    <property type="entry name" value="MRP-L47"/>
    <property type="match status" value="1"/>
</dbReference>
<evidence type="ECO:0000250" key="1"/>
<evidence type="ECO:0000255" key="2"/>
<evidence type="ECO:0000256" key="3">
    <source>
        <dbReference type="SAM" id="MobiDB-lite"/>
    </source>
</evidence>
<evidence type="ECO:0000305" key="4"/>
<proteinExistence type="inferred from homology"/>